<sequence>MRYLTAGESHGPQLTAILEGVPAGLELRAEHINKELARRQKGYGRGRRMQIEKDEVKIVGGVRHGKTLGSPIALVVENRDFQHWQTIMAVEPIDDETEVKRKVTRPRPGHADLNGALKYGHRDMRNVLERSSARETTVRVAAGAVAKRLLEEVGIRVAGHVLEIGGVRAEKLDYRSLDELQKVTEESPVRCFDPEAGQKMMEAIDLAKKNGDSIGGIVEVIVEGVPAGVGSYVHYDRKLDAKIAAAIVSINAFKGVEFGIGFEAARRPGSEVHDEIIWSPEQGFSRRTNRAGGFEGGMTTGMPIVVRGVMKPIPTLYKPLGSVDIDTKEPFTASIERSDSCAVPAASVVAEAVVAWEVAAAIVEQFGQDRIDLIKENIERARRYAREF</sequence>
<name>AROC_GEOTN</name>
<dbReference type="EC" id="4.2.3.5" evidence="1"/>
<dbReference type="EMBL" id="CP000557">
    <property type="protein sequence ID" value="ABO67493.1"/>
    <property type="molecule type" value="Genomic_DNA"/>
</dbReference>
<dbReference type="RefSeq" id="WP_008879615.1">
    <property type="nucleotide sequence ID" value="NC_009328.1"/>
</dbReference>
<dbReference type="SMR" id="A4IQ89"/>
<dbReference type="GeneID" id="87623759"/>
<dbReference type="KEGG" id="gtn:GTNG_2141"/>
<dbReference type="eggNOG" id="COG0082">
    <property type="taxonomic scope" value="Bacteria"/>
</dbReference>
<dbReference type="HOGENOM" id="CLU_034547_2_0_9"/>
<dbReference type="UniPathway" id="UPA00053">
    <property type="reaction ID" value="UER00090"/>
</dbReference>
<dbReference type="Proteomes" id="UP000001578">
    <property type="component" value="Chromosome"/>
</dbReference>
<dbReference type="GO" id="GO:0005829">
    <property type="term" value="C:cytosol"/>
    <property type="evidence" value="ECO:0007669"/>
    <property type="project" value="TreeGrafter"/>
</dbReference>
<dbReference type="GO" id="GO:0004107">
    <property type="term" value="F:chorismate synthase activity"/>
    <property type="evidence" value="ECO:0007669"/>
    <property type="project" value="UniProtKB-UniRule"/>
</dbReference>
<dbReference type="GO" id="GO:0010181">
    <property type="term" value="F:FMN binding"/>
    <property type="evidence" value="ECO:0007669"/>
    <property type="project" value="TreeGrafter"/>
</dbReference>
<dbReference type="GO" id="GO:0008652">
    <property type="term" value="P:amino acid biosynthetic process"/>
    <property type="evidence" value="ECO:0007669"/>
    <property type="project" value="UniProtKB-KW"/>
</dbReference>
<dbReference type="GO" id="GO:0009073">
    <property type="term" value="P:aromatic amino acid family biosynthetic process"/>
    <property type="evidence" value="ECO:0007669"/>
    <property type="project" value="UniProtKB-KW"/>
</dbReference>
<dbReference type="GO" id="GO:0009423">
    <property type="term" value="P:chorismate biosynthetic process"/>
    <property type="evidence" value="ECO:0007669"/>
    <property type="project" value="UniProtKB-UniRule"/>
</dbReference>
<dbReference type="CDD" id="cd07304">
    <property type="entry name" value="Chorismate_synthase"/>
    <property type="match status" value="1"/>
</dbReference>
<dbReference type="FunFam" id="3.60.150.10:FF:000002">
    <property type="entry name" value="Chorismate synthase"/>
    <property type="match status" value="1"/>
</dbReference>
<dbReference type="Gene3D" id="3.60.150.10">
    <property type="entry name" value="Chorismate synthase AroC"/>
    <property type="match status" value="1"/>
</dbReference>
<dbReference type="HAMAP" id="MF_00300">
    <property type="entry name" value="Chorismate_synth"/>
    <property type="match status" value="1"/>
</dbReference>
<dbReference type="InterPro" id="IPR000453">
    <property type="entry name" value="Chorismate_synth"/>
</dbReference>
<dbReference type="InterPro" id="IPR035904">
    <property type="entry name" value="Chorismate_synth_AroC_sf"/>
</dbReference>
<dbReference type="InterPro" id="IPR020541">
    <property type="entry name" value="Chorismate_synthase_CS"/>
</dbReference>
<dbReference type="NCBIfam" id="TIGR00033">
    <property type="entry name" value="aroC"/>
    <property type="match status" value="1"/>
</dbReference>
<dbReference type="NCBIfam" id="NF003793">
    <property type="entry name" value="PRK05382.1"/>
    <property type="match status" value="1"/>
</dbReference>
<dbReference type="PANTHER" id="PTHR21085">
    <property type="entry name" value="CHORISMATE SYNTHASE"/>
    <property type="match status" value="1"/>
</dbReference>
<dbReference type="PANTHER" id="PTHR21085:SF0">
    <property type="entry name" value="CHORISMATE SYNTHASE"/>
    <property type="match status" value="1"/>
</dbReference>
<dbReference type="Pfam" id="PF01264">
    <property type="entry name" value="Chorismate_synt"/>
    <property type="match status" value="1"/>
</dbReference>
<dbReference type="PIRSF" id="PIRSF001456">
    <property type="entry name" value="Chorismate_synth"/>
    <property type="match status" value="1"/>
</dbReference>
<dbReference type="SUPFAM" id="SSF103263">
    <property type="entry name" value="Chorismate synthase, AroC"/>
    <property type="match status" value="1"/>
</dbReference>
<dbReference type="PROSITE" id="PS00787">
    <property type="entry name" value="CHORISMATE_SYNTHASE_1"/>
    <property type="match status" value="1"/>
</dbReference>
<dbReference type="PROSITE" id="PS00788">
    <property type="entry name" value="CHORISMATE_SYNTHASE_2"/>
    <property type="match status" value="1"/>
</dbReference>
<dbReference type="PROSITE" id="PS00789">
    <property type="entry name" value="CHORISMATE_SYNTHASE_3"/>
    <property type="match status" value="1"/>
</dbReference>
<proteinExistence type="inferred from homology"/>
<comment type="function">
    <text evidence="1">Catalyzes the anti-1,4-elimination of the C-3 phosphate and the C-6 proR hydrogen from 5-enolpyruvylshikimate-3-phosphate (EPSP) to yield chorismate, which is the branch point compound that serves as the starting substrate for the three terminal pathways of aromatic amino acid biosynthesis. This reaction introduces a second double bond into the aromatic ring system.</text>
</comment>
<comment type="catalytic activity">
    <reaction evidence="1">
        <text>5-O-(1-carboxyvinyl)-3-phosphoshikimate = chorismate + phosphate</text>
        <dbReference type="Rhea" id="RHEA:21020"/>
        <dbReference type="ChEBI" id="CHEBI:29748"/>
        <dbReference type="ChEBI" id="CHEBI:43474"/>
        <dbReference type="ChEBI" id="CHEBI:57701"/>
        <dbReference type="EC" id="4.2.3.5"/>
    </reaction>
</comment>
<comment type="cofactor">
    <cofactor evidence="1">
        <name>FMNH2</name>
        <dbReference type="ChEBI" id="CHEBI:57618"/>
    </cofactor>
    <text evidence="1">Reduced FMN (FMNH(2)).</text>
</comment>
<comment type="pathway">
    <text evidence="1">Metabolic intermediate biosynthesis; chorismate biosynthesis; chorismate from D-erythrose 4-phosphate and phosphoenolpyruvate: step 7/7.</text>
</comment>
<comment type="subunit">
    <text evidence="1">Homotetramer.</text>
</comment>
<comment type="similarity">
    <text evidence="1">Belongs to the chorismate synthase family.</text>
</comment>
<protein>
    <recommendedName>
        <fullName evidence="1">Chorismate synthase</fullName>
        <shortName evidence="1">CS</shortName>
        <ecNumber evidence="1">4.2.3.5</ecNumber>
    </recommendedName>
    <alternativeName>
        <fullName evidence="1">5-enolpyruvylshikimate-3-phosphate phospholyase</fullName>
    </alternativeName>
</protein>
<keyword id="KW-0028">Amino-acid biosynthesis</keyword>
<keyword id="KW-0057">Aromatic amino acid biosynthesis</keyword>
<keyword id="KW-0274">FAD</keyword>
<keyword id="KW-0285">Flavoprotein</keyword>
<keyword id="KW-0288">FMN</keyword>
<keyword id="KW-0456">Lyase</keyword>
<keyword id="KW-0521">NADP</keyword>
<evidence type="ECO:0000255" key="1">
    <source>
        <dbReference type="HAMAP-Rule" id="MF_00300"/>
    </source>
</evidence>
<accession>A4IQ89</accession>
<feature type="chain" id="PRO_1000022493" description="Chorismate synthase">
    <location>
        <begin position="1"/>
        <end position="388"/>
    </location>
</feature>
<feature type="binding site" evidence="1">
    <location>
        <position position="39"/>
    </location>
    <ligand>
        <name>NADP(+)</name>
        <dbReference type="ChEBI" id="CHEBI:58349"/>
    </ligand>
</feature>
<feature type="binding site" evidence="1">
    <location>
        <position position="45"/>
    </location>
    <ligand>
        <name>NADP(+)</name>
        <dbReference type="ChEBI" id="CHEBI:58349"/>
    </ligand>
</feature>
<feature type="binding site" evidence="1">
    <location>
        <begin position="130"/>
        <end position="132"/>
    </location>
    <ligand>
        <name>FMN</name>
        <dbReference type="ChEBI" id="CHEBI:58210"/>
    </ligand>
</feature>
<feature type="binding site" evidence="1">
    <location>
        <begin position="251"/>
        <end position="252"/>
    </location>
    <ligand>
        <name>FMN</name>
        <dbReference type="ChEBI" id="CHEBI:58210"/>
    </ligand>
</feature>
<feature type="binding site" evidence="1">
    <location>
        <position position="296"/>
    </location>
    <ligand>
        <name>FMN</name>
        <dbReference type="ChEBI" id="CHEBI:58210"/>
    </ligand>
</feature>
<feature type="binding site" evidence="1">
    <location>
        <begin position="311"/>
        <end position="315"/>
    </location>
    <ligand>
        <name>FMN</name>
        <dbReference type="ChEBI" id="CHEBI:58210"/>
    </ligand>
</feature>
<feature type="binding site" evidence="1">
    <location>
        <position position="337"/>
    </location>
    <ligand>
        <name>FMN</name>
        <dbReference type="ChEBI" id="CHEBI:58210"/>
    </ligand>
</feature>
<organism>
    <name type="scientific">Geobacillus thermodenitrificans (strain NG80-2)</name>
    <dbReference type="NCBI Taxonomy" id="420246"/>
    <lineage>
        <taxon>Bacteria</taxon>
        <taxon>Bacillati</taxon>
        <taxon>Bacillota</taxon>
        <taxon>Bacilli</taxon>
        <taxon>Bacillales</taxon>
        <taxon>Anoxybacillaceae</taxon>
        <taxon>Geobacillus</taxon>
    </lineage>
</organism>
<reference key="1">
    <citation type="journal article" date="2007" name="Proc. Natl. Acad. Sci. U.S.A.">
        <title>Genome and proteome of long-chain alkane degrading Geobacillus thermodenitrificans NG80-2 isolated from a deep-subsurface oil reservoir.</title>
        <authorList>
            <person name="Feng L."/>
            <person name="Wang W."/>
            <person name="Cheng J."/>
            <person name="Ren Y."/>
            <person name="Zhao G."/>
            <person name="Gao C."/>
            <person name="Tang Y."/>
            <person name="Liu X."/>
            <person name="Han W."/>
            <person name="Peng X."/>
            <person name="Liu R."/>
            <person name="Wang L."/>
        </authorList>
    </citation>
    <scope>NUCLEOTIDE SEQUENCE [LARGE SCALE GENOMIC DNA]</scope>
    <source>
        <strain>NG80-2</strain>
    </source>
</reference>
<gene>
    <name evidence="1" type="primary">aroC</name>
    <name type="ordered locus">GTNG_2141</name>
</gene>